<sequence length="295" mass="32279">MKAVIPVAGLGTRMLPATKAIPKEMLTLVDKPLIQYVVNECVAAGIKEIVLVTHSSKNAIENHFDTSFELETMLEKRVKRQLLEEVRSICPKNVTIMHVRQGNAKGLGHAVLCGRPLVGNESFAVMLPDVLLAEFSADQKKENLAAMIQRFNETGASQIMVTPVPQENVSSYGVADCGGIELNGGESAKINSIVEKPSIEDAPSNLAVVGRYVFSAAIWDLLEKTPIGVGDEIQLTDAIDMLIEKETVEAFHMTGETFDCGDKIGYMEAFVEYGIRHEKLGKEFKSFIKNLAKTL</sequence>
<dbReference type="EC" id="2.7.7.9"/>
<dbReference type="EMBL" id="L42023">
    <property type="protein sequence ID" value="AAC22471.1"/>
    <property type="molecule type" value="Genomic_DNA"/>
</dbReference>
<dbReference type="PIR" id="G64095">
    <property type="entry name" value="G64095"/>
</dbReference>
<dbReference type="RefSeq" id="NP_438972.1">
    <property type="nucleotide sequence ID" value="NC_000907.1"/>
</dbReference>
<dbReference type="SMR" id="P44878"/>
<dbReference type="STRING" id="71421.HI_0812"/>
<dbReference type="EnsemblBacteria" id="AAC22471">
    <property type="protein sequence ID" value="AAC22471"/>
    <property type="gene ID" value="HI_0812"/>
</dbReference>
<dbReference type="KEGG" id="hin:HI_0812"/>
<dbReference type="PATRIC" id="fig|71421.8.peg.853"/>
<dbReference type="eggNOG" id="COG1210">
    <property type="taxonomic scope" value="Bacteria"/>
</dbReference>
<dbReference type="HOGENOM" id="CLU_029499_1_1_6"/>
<dbReference type="OrthoDB" id="9803306at2"/>
<dbReference type="PhylomeDB" id="P44878"/>
<dbReference type="BioCyc" id="HINF71421:G1GJ1-853-MONOMER"/>
<dbReference type="Proteomes" id="UP000000579">
    <property type="component" value="Chromosome"/>
</dbReference>
<dbReference type="GO" id="GO:0003983">
    <property type="term" value="F:UTP:glucose-1-phosphate uridylyltransferase activity"/>
    <property type="evidence" value="ECO:0007669"/>
    <property type="project" value="UniProtKB-EC"/>
</dbReference>
<dbReference type="GO" id="GO:0009058">
    <property type="term" value="P:biosynthetic process"/>
    <property type="evidence" value="ECO:0007669"/>
    <property type="project" value="InterPro"/>
</dbReference>
<dbReference type="GO" id="GO:0006011">
    <property type="term" value="P:UDP-alpha-D-glucose metabolic process"/>
    <property type="evidence" value="ECO:0007669"/>
    <property type="project" value="InterPro"/>
</dbReference>
<dbReference type="CDD" id="cd02541">
    <property type="entry name" value="UGPase_prokaryotic"/>
    <property type="match status" value="1"/>
</dbReference>
<dbReference type="Gene3D" id="3.90.550.10">
    <property type="entry name" value="Spore Coat Polysaccharide Biosynthesis Protein SpsA, Chain A"/>
    <property type="match status" value="1"/>
</dbReference>
<dbReference type="InterPro" id="IPR005771">
    <property type="entry name" value="GalU_uridylyltTrfase_bac/arc"/>
</dbReference>
<dbReference type="InterPro" id="IPR005835">
    <property type="entry name" value="NTP_transferase_dom"/>
</dbReference>
<dbReference type="InterPro" id="IPR029044">
    <property type="entry name" value="Nucleotide-diphossugar_trans"/>
</dbReference>
<dbReference type="NCBIfam" id="TIGR01099">
    <property type="entry name" value="galU"/>
    <property type="match status" value="1"/>
</dbReference>
<dbReference type="PANTHER" id="PTHR43197">
    <property type="entry name" value="UTP--GLUCOSE-1-PHOSPHATE URIDYLYLTRANSFERASE"/>
    <property type="match status" value="1"/>
</dbReference>
<dbReference type="PANTHER" id="PTHR43197:SF1">
    <property type="entry name" value="UTP--GLUCOSE-1-PHOSPHATE URIDYLYLTRANSFERASE"/>
    <property type="match status" value="1"/>
</dbReference>
<dbReference type="Pfam" id="PF00483">
    <property type="entry name" value="NTP_transferase"/>
    <property type="match status" value="1"/>
</dbReference>
<dbReference type="SUPFAM" id="SSF53448">
    <property type="entry name" value="Nucleotide-diphospho-sugar transferases"/>
    <property type="match status" value="1"/>
</dbReference>
<feature type="chain" id="PRO_0000201358" description="UTP--glucose-1-phosphate uridylyltransferase">
    <location>
        <begin position="1"/>
        <end position="295"/>
    </location>
</feature>
<protein>
    <recommendedName>
        <fullName>UTP--glucose-1-phosphate uridylyltransferase</fullName>
        <ecNumber>2.7.7.9</ecNumber>
    </recommendedName>
    <alternativeName>
        <fullName>Alpha-D-glucosyl-1-phosphate uridylyltransferase</fullName>
    </alternativeName>
    <alternativeName>
        <fullName>UDP-glucose pyrophosphorylase</fullName>
        <shortName>UDPGP</shortName>
    </alternativeName>
    <alternativeName>
        <fullName>Uridine diphosphoglucose pyrophosphorylase</fullName>
    </alternativeName>
</protein>
<accession>P44878</accession>
<reference key="1">
    <citation type="journal article" date="1995" name="Science">
        <title>Whole-genome random sequencing and assembly of Haemophilus influenzae Rd.</title>
        <authorList>
            <person name="Fleischmann R.D."/>
            <person name="Adams M.D."/>
            <person name="White O."/>
            <person name="Clayton R.A."/>
            <person name="Kirkness E.F."/>
            <person name="Kerlavage A.R."/>
            <person name="Bult C.J."/>
            <person name="Tomb J.-F."/>
            <person name="Dougherty B.A."/>
            <person name="Merrick J.M."/>
            <person name="McKenney K."/>
            <person name="Sutton G.G."/>
            <person name="FitzHugh W."/>
            <person name="Fields C.A."/>
            <person name="Gocayne J.D."/>
            <person name="Scott J.D."/>
            <person name="Shirley R."/>
            <person name="Liu L.-I."/>
            <person name="Glodek A."/>
            <person name="Kelley J.M."/>
            <person name="Weidman J.F."/>
            <person name="Phillips C.A."/>
            <person name="Spriggs T."/>
            <person name="Hedblom E."/>
            <person name="Cotton M.D."/>
            <person name="Utterback T.R."/>
            <person name="Hanna M.C."/>
            <person name="Nguyen D.T."/>
            <person name="Saudek D.M."/>
            <person name="Brandon R.C."/>
            <person name="Fine L.D."/>
            <person name="Fritchman J.L."/>
            <person name="Fuhrmann J.L."/>
            <person name="Geoghagen N.S.M."/>
            <person name="Gnehm C.L."/>
            <person name="McDonald L.A."/>
            <person name="Small K.V."/>
            <person name="Fraser C.M."/>
            <person name="Smith H.O."/>
            <person name="Venter J.C."/>
        </authorList>
    </citation>
    <scope>NUCLEOTIDE SEQUENCE [LARGE SCALE GENOMIC DNA]</scope>
    <source>
        <strain>ATCC 51907 / DSM 11121 / KW20 / Rd</strain>
    </source>
</reference>
<evidence type="ECO:0000250" key="1"/>
<evidence type="ECO:0000305" key="2"/>
<comment type="function">
    <text evidence="1">May play a role in stationary phase survival.</text>
</comment>
<comment type="catalytic activity">
    <reaction>
        <text>alpha-D-glucose 1-phosphate + UTP + H(+) = UDP-alpha-D-glucose + diphosphate</text>
        <dbReference type="Rhea" id="RHEA:19889"/>
        <dbReference type="ChEBI" id="CHEBI:15378"/>
        <dbReference type="ChEBI" id="CHEBI:33019"/>
        <dbReference type="ChEBI" id="CHEBI:46398"/>
        <dbReference type="ChEBI" id="CHEBI:58601"/>
        <dbReference type="ChEBI" id="CHEBI:58885"/>
        <dbReference type="EC" id="2.7.7.9"/>
    </reaction>
</comment>
<comment type="similarity">
    <text evidence="2">Belongs to the UDPGP type 2 family.</text>
</comment>
<name>GALU_HAEIN</name>
<organism>
    <name type="scientific">Haemophilus influenzae (strain ATCC 51907 / DSM 11121 / KW20 / Rd)</name>
    <dbReference type="NCBI Taxonomy" id="71421"/>
    <lineage>
        <taxon>Bacteria</taxon>
        <taxon>Pseudomonadati</taxon>
        <taxon>Pseudomonadota</taxon>
        <taxon>Gammaproteobacteria</taxon>
        <taxon>Pasteurellales</taxon>
        <taxon>Pasteurellaceae</taxon>
        <taxon>Haemophilus</taxon>
    </lineage>
</organism>
<proteinExistence type="inferred from homology"/>
<gene>
    <name type="primary">galU</name>
    <name type="ordered locus">HI_0812</name>
</gene>
<keyword id="KW-0548">Nucleotidyltransferase</keyword>
<keyword id="KW-1185">Reference proteome</keyword>
<keyword id="KW-0808">Transferase</keyword>